<protein>
    <recommendedName>
        <fullName>Protein OPG058</fullName>
    </recommendedName>
    <alternativeName>
        <fullName>Protein F14</fullName>
    </alternativeName>
    <alternativeName>
        <fullName>Protein F4</fullName>
    </alternativeName>
</protein>
<keyword id="KW-0244">Early protein</keyword>
<evidence type="ECO:0000250" key="1">
    <source>
        <dbReference type="UniProtKB" id="P68707"/>
    </source>
</evidence>
<evidence type="ECO:0000305" key="2"/>
<reference key="1">
    <citation type="journal article" date="1988" name="Biotekhnologiya">
        <title>Structural-functional organization of segment of vaccinia virus genome.</title>
        <authorList>
            <person name="Mikryukov N.N."/>
            <person name="Chizhikov V.E."/>
            <person name="Prikhod'Ko G.G."/>
            <person name="Urmmanov I.M."/>
            <person name="Serpinskii O.I."/>
            <person name="Blinov V.M."/>
            <person name="Nikulin A.E."/>
            <person name="Vasilenko S.K."/>
        </authorList>
    </citation>
    <scope>NUCLEOTIDE SEQUENCE [GENOMIC DNA]</scope>
</reference>
<dbReference type="EMBL" id="M57977">
    <property type="protein sequence ID" value="AAA48283.1"/>
    <property type="molecule type" value="Genomic_DNA"/>
</dbReference>
<dbReference type="SMR" id="P29890"/>
<dbReference type="InterPro" id="IPR009280">
    <property type="entry name" value="Orthopox_F14"/>
</dbReference>
<dbReference type="Pfam" id="PF06076">
    <property type="entry name" value="Orthopox_F14"/>
    <property type="match status" value="1"/>
</dbReference>
<sequence length="73" mass="8307">MKYRLYSEGLSITNDLNSIIGQQSTMDTDIEIDEDDIMELLNILTELGCDVDFDENFSDIADDILESLIEQDV</sequence>
<feature type="chain" id="PRO_0000099508" description="Protein OPG058">
    <location>
        <begin position="1"/>
        <end position="73"/>
    </location>
</feature>
<name>PG058_VACCP</name>
<comment type="induction">
    <text evidence="1">Expressed in the early phase of the viral replicative cycle.</text>
</comment>
<comment type="similarity">
    <text evidence="2">Belongs to the orthopoxvirus OPG058 family.</text>
</comment>
<proteinExistence type="inferred from homology"/>
<gene>
    <name type="primary">OPG058</name>
    <name type="ORF">F4</name>
</gene>
<accession>P29890</accession>
<organism>
    <name type="scientific">Vaccinia virus (strain L-IVP)</name>
    <name type="common">VACV</name>
    <dbReference type="NCBI Taxonomy" id="31531"/>
    <lineage>
        <taxon>Viruses</taxon>
        <taxon>Varidnaviria</taxon>
        <taxon>Bamfordvirae</taxon>
        <taxon>Nucleocytoviricota</taxon>
        <taxon>Pokkesviricetes</taxon>
        <taxon>Chitovirales</taxon>
        <taxon>Poxviridae</taxon>
        <taxon>Chordopoxvirinae</taxon>
        <taxon>Orthopoxvirus</taxon>
        <taxon>Vaccinia virus</taxon>
    </lineage>
</organism>
<organismHost>
    <name type="scientific">Homo sapiens</name>
    <name type="common">Human</name>
    <dbReference type="NCBI Taxonomy" id="9606"/>
</organismHost>